<sequence>MEWETVIGLEIHAQLATKSKIFSGAATAYGAEPNRQACAVDLGMPGVLPVLNKGAVRMATKFGLAIGAKIAPRSVFARKNYFYPDLPKGYQISQYELPIVEGGELWIELEDGERKRIGVTRAHLEEDAGKSLHEDFHGMTGVDLNRAGTPLLEIVSEPDLRSAAEAAAYMKKLHALVRYLEICDGNMQEGSFRCDANVSVRPKGEEKFGTRAELKNLNSFRFVERAINYEVERQIALIESGGTVVQETRLYDADKGETRSMRTKEEANDYRYFPDPDLLPVELDPTFIEEVRETLPELPDEKRARFVEEYGLSDYDAGVLTATRELAEFYESVVTESGGFAKRSANWVQGDFLGALNKAGLELADSPVTPEMLGRLVARIEDETISGRVAKEVFEAMWNGEGEPDQIIEAKGLKQVTDTGAIEAMIDEVLAANPKQVEQYKGGKDKLLGFFVGQVMKASRGKANPGQVNELLKEKLDS</sequence>
<dbReference type="EC" id="6.3.5.-" evidence="1"/>
<dbReference type="EMBL" id="CP000453">
    <property type="protein sequence ID" value="ABI55521.1"/>
    <property type="molecule type" value="Genomic_DNA"/>
</dbReference>
<dbReference type="RefSeq" id="WP_011627917.1">
    <property type="nucleotide sequence ID" value="NC_008340.1"/>
</dbReference>
<dbReference type="SMR" id="Q0ACB6"/>
<dbReference type="KEGG" id="aeh:Mlg_0166"/>
<dbReference type="eggNOG" id="COG0064">
    <property type="taxonomic scope" value="Bacteria"/>
</dbReference>
<dbReference type="HOGENOM" id="CLU_019240_0_0_6"/>
<dbReference type="OrthoDB" id="9804078at2"/>
<dbReference type="Proteomes" id="UP000001962">
    <property type="component" value="Chromosome"/>
</dbReference>
<dbReference type="GO" id="GO:0050566">
    <property type="term" value="F:asparaginyl-tRNA synthase (glutamine-hydrolyzing) activity"/>
    <property type="evidence" value="ECO:0007669"/>
    <property type="project" value="RHEA"/>
</dbReference>
<dbReference type="GO" id="GO:0005524">
    <property type="term" value="F:ATP binding"/>
    <property type="evidence" value="ECO:0007669"/>
    <property type="project" value="UniProtKB-KW"/>
</dbReference>
<dbReference type="GO" id="GO:0050567">
    <property type="term" value="F:glutaminyl-tRNA synthase (glutamine-hydrolyzing) activity"/>
    <property type="evidence" value="ECO:0007669"/>
    <property type="project" value="UniProtKB-UniRule"/>
</dbReference>
<dbReference type="GO" id="GO:0070681">
    <property type="term" value="P:glutaminyl-tRNAGln biosynthesis via transamidation"/>
    <property type="evidence" value="ECO:0007669"/>
    <property type="project" value="TreeGrafter"/>
</dbReference>
<dbReference type="GO" id="GO:0006412">
    <property type="term" value="P:translation"/>
    <property type="evidence" value="ECO:0007669"/>
    <property type="project" value="UniProtKB-UniRule"/>
</dbReference>
<dbReference type="FunFam" id="1.10.10.410:FF:000001">
    <property type="entry name" value="Aspartyl/glutamyl-tRNA(Asn/Gln) amidotransferase subunit B"/>
    <property type="match status" value="1"/>
</dbReference>
<dbReference type="FunFam" id="1.10.150.380:FF:000001">
    <property type="entry name" value="Aspartyl/glutamyl-tRNA(Asn/Gln) amidotransferase subunit B"/>
    <property type="match status" value="1"/>
</dbReference>
<dbReference type="Gene3D" id="1.10.10.410">
    <property type="match status" value="1"/>
</dbReference>
<dbReference type="Gene3D" id="1.10.150.380">
    <property type="entry name" value="GatB domain, N-terminal subdomain"/>
    <property type="match status" value="1"/>
</dbReference>
<dbReference type="HAMAP" id="MF_00121">
    <property type="entry name" value="GatB"/>
    <property type="match status" value="1"/>
</dbReference>
<dbReference type="InterPro" id="IPR017959">
    <property type="entry name" value="Asn/Gln-tRNA_amidoTrfase_suB/E"/>
</dbReference>
<dbReference type="InterPro" id="IPR006075">
    <property type="entry name" value="Asn/Gln-tRNA_Trfase_suB/E_cat"/>
</dbReference>
<dbReference type="InterPro" id="IPR018027">
    <property type="entry name" value="Asn/Gln_amidotransferase"/>
</dbReference>
<dbReference type="InterPro" id="IPR003789">
    <property type="entry name" value="Asn/Gln_tRNA_amidoTrase-B-like"/>
</dbReference>
<dbReference type="InterPro" id="IPR004413">
    <property type="entry name" value="GatB"/>
</dbReference>
<dbReference type="InterPro" id="IPR042114">
    <property type="entry name" value="GatB_C_1"/>
</dbReference>
<dbReference type="InterPro" id="IPR023168">
    <property type="entry name" value="GatB_Yqey_C_2"/>
</dbReference>
<dbReference type="InterPro" id="IPR017958">
    <property type="entry name" value="Gln-tRNA_amidoTrfase_suB_CS"/>
</dbReference>
<dbReference type="InterPro" id="IPR014746">
    <property type="entry name" value="Gln_synth/guanido_kin_cat_dom"/>
</dbReference>
<dbReference type="NCBIfam" id="TIGR00133">
    <property type="entry name" value="gatB"/>
    <property type="match status" value="1"/>
</dbReference>
<dbReference type="NCBIfam" id="NF004012">
    <property type="entry name" value="PRK05477.1-2"/>
    <property type="match status" value="1"/>
</dbReference>
<dbReference type="NCBIfam" id="NF004014">
    <property type="entry name" value="PRK05477.1-4"/>
    <property type="match status" value="1"/>
</dbReference>
<dbReference type="NCBIfam" id="NF004015">
    <property type="entry name" value="PRK05477.1-5"/>
    <property type="match status" value="1"/>
</dbReference>
<dbReference type="PANTHER" id="PTHR11659">
    <property type="entry name" value="GLUTAMYL-TRNA GLN AMIDOTRANSFERASE SUBUNIT B MITOCHONDRIAL AND PROKARYOTIC PET112-RELATED"/>
    <property type="match status" value="1"/>
</dbReference>
<dbReference type="PANTHER" id="PTHR11659:SF0">
    <property type="entry name" value="GLUTAMYL-TRNA(GLN) AMIDOTRANSFERASE SUBUNIT B, MITOCHONDRIAL"/>
    <property type="match status" value="1"/>
</dbReference>
<dbReference type="Pfam" id="PF02934">
    <property type="entry name" value="GatB_N"/>
    <property type="match status" value="1"/>
</dbReference>
<dbReference type="Pfam" id="PF02637">
    <property type="entry name" value="GatB_Yqey"/>
    <property type="match status" value="1"/>
</dbReference>
<dbReference type="SMART" id="SM00845">
    <property type="entry name" value="GatB_Yqey"/>
    <property type="match status" value="1"/>
</dbReference>
<dbReference type="SUPFAM" id="SSF89095">
    <property type="entry name" value="GatB/YqeY motif"/>
    <property type="match status" value="1"/>
</dbReference>
<dbReference type="SUPFAM" id="SSF55931">
    <property type="entry name" value="Glutamine synthetase/guanido kinase"/>
    <property type="match status" value="1"/>
</dbReference>
<dbReference type="PROSITE" id="PS01234">
    <property type="entry name" value="GATB"/>
    <property type="match status" value="1"/>
</dbReference>
<protein>
    <recommendedName>
        <fullName evidence="1">Aspartyl/glutamyl-tRNA(Asn/Gln) amidotransferase subunit B</fullName>
        <shortName evidence="1">Asp/Glu-ADT subunit B</shortName>
        <ecNumber evidence="1">6.3.5.-</ecNumber>
    </recommendedName>
</protein>
<keyword id="KW-0067">ATP-binding</keyword>
<keyword id="KW-0436">Ligase</keyword>
<keyword id="KW-0547">Nucleotide-binding</keyword>
<keyword id="KW-0648">Protein biosynthesis</keyword>
<keyword id="KW-1185">Reference proteome</keyword>
<proteinExistence type="inferred from homology"/>
<feature type="chain" id="PRO_1000015929" description="Aspartyl/glutamyl-tRNA(Asn/Gln) amidotransferase subunit B">
    <location>
        <begin position="1"/>
        <end position="478"/>
    </location>
</feature>
<comment type="function">
    <text evidence="1">Allows the formation of correctly charged Asn-tRNA(Asn) or Gln-tRNA(Gln) through the transamidation of misacylated Asp-tRNA(Asn) or Glu-tRNA(Gln) in organisms which lack either or both of asparaginyl-tRNA or glutaminyl-tRNA synthetases. The reaction takes place in the presence of glutamine and ATP through an activated phospho-Asp-tRNA(Asn) or phospho-Glu-tRNA(Gln).</text>
</comment>
<comment type="catalytic activity">
    <reaction evidence="1">
        <text>L-glutamyl-tRNA(Gln) + L-glutamine + ATP + H2O = L-glutaminyl-tRNA(Gln) + L-glutamate + ADP + phosphate + H(+)</text>
        <dbReference type="Rhea" id="RHEA:17521"/>
        <dbReference type="Rhea" id="RHEA-COMP:9681"/>
        <dbReference type="Rhea" id="RHEA-COMP:9684"/>
        <dbReference type="ChEBI" id="CHEBI:15377"/>
        <dbReference type="ChEBI" id="CHEBI:15378"/>
        <dbReference type="ChEBI" id="CHEBI:29985"/>
        <dbReference type="ChEBI" id="CHEBI:30616"/>
        <dbReference type="ChEBI" id="CHEBI:43474"/>
        <dbReference type="ChEBI" id="CHEBI:58359"/>
        <dbReference type="ChEBI" id="CHEBI:78520"/>
        <dbReference type="ChEBI" id="CHEBI:78521"/>
        <dbReference type="ChEBI" id="CHEBI:456216"/>
    </reaction>
</comment>
<comment type="catalytic activity">
    <reaction evidence="1">
        <text>L-aspartyl-tRNA(Asn) + L-glutamine + ATP + H2O = L-asparaginyl-tRNA(Asn) + L-glutamate + ADP + phosphate + 2 H(+)</text>
        <dbReference type="Rhea" id="RHEA:14513"/>
        <dbReference type="Rhea" id="RHEA-COMP:9674"/>
        <dbReference type="Rhea" id="RHEA-COMP:9677"/>
        <dbReference type="ChEBI" id="CHEBI:15377"/>
        <dbReference type="ChEBI" id="CHEBI:15378"/>
        <dbReference type="ChEBI" id="CHEBI:29985"/>
        <dbReference type="ChEBI" id="CHEBI:30616"/>
        <dbReference type="ChEBI" id="CHEBI:43474"/>
        <dbReference type="ChEBI" id="CHEBI:58359"/>
        <dbReference type="ChEBI" id="CHEBI:78515"/>
        <dbReference type="ChEBI" id="CHEBI:78516"/>
        <dbReference type="ChEBI" id="CHEBI:456216"/>
    </reaction>
</comment>
<comment type="subunit">
    <text evidence="1">Heterotrimer of A, B and C subunits.</text>
</comment>
<comment type="similarity">
    <text evidence="1">Belongs to the GatB/GatE family. GatB subfamily.</text>
</comment>
<evidence type="ECO:0000255" key="1">
    <source>
        <dbReference type="HAMAP-Rule" id="MF_00121"/>
    </source>
</evidence>
<organism>
    <name type="scientific">Alkalilimnicola ehrlichii (strain ATCC BAA-1101 / DSM 17681 / MLHE-1)</name>
    <dbReference type="NCBI Taxonomy" id="187272"/>
    <lineage>
        <taxon>Bacteria</taxon>
        <taxon>Pseudomonadati</taxon>
        <taxon>Pseudomonadota</taxon>
        <taxon>Gammaproteobacteria</taxon>
        <taxon>Chromatiales</taxon>
        <taxon>Ectothiorhodospiraceae</taxon>
        <taxon>Alkalilimnicola</taxon>
    </lineage>
</organism>
<accession>Q0ACB6</accession>
<gene>
    <name evidence="1" type="primary">gatB</name>
    <name type="ordered locus">Mlg_0166</name>
</gene>
<name>GATB_ALKEH</name>
<reference key="1">
    <citation type="submission" date="2006-08" db="EMBL/GenBank/DDBJ databases">
        <title>Complete sequence of Alkalilimnicola ehrilichei MLHE-1.</title>
        <authorList>
            <person name="Copeland A."/>
            <person name="Lucas S."/>
            <person name="Lapidus A."/>
            <person name="Barry K."/>
            <person name="Detter J.C."/>
            <person name="Glavina del Rio T."/>
            <person name="Hammon N."/>
            <person name="Israni S."/>
            <person name="Dalin E."/>
            <person name="Tice H."/>
            <person name="Pitluck S."/>
            <person name="Sims D."/>
            <person name="Brettin T."/>
            <person name="Bruce D."/>
            <person name="Han C."/>
            <person name="Tapia R."/>
            <person name="Gilna P."/>
            <person name="Schmutz J."/>
            <person name="Larimer F."/>
            <person name="Land M."/>
            <person name="Hauser L."/>
            <person name="Kyrpides N."/>
            <person name="Mikhailova N."/>
            <person name="Oremland R.S."/>
            <person name="Hoeft S.E."/>
            <person name="Switzer-Blum J."/>
            <person name="Kulp T."/>
            <person name="King G."/>
            <person name="Tabita R."/>
            <person name="Witte B."/>
            <person name="Santini J.M."/>
            <person name="Basu P."/>
            <person name="Hollibaugh J.T."/>
            <person name="Xie G."/>
            <person name="Stolz J.F."/>
            <person name="Richardson P."/>
        </authorList>
    </citation>
    <scope>NUCLEOTIDE SEQUENCE [LARGE SCALE GENOMIC DNA]</scope>
    <source>
        <strain>ATCC BAA-1101 / DSM 17681 / MLHE-1</strain>
    </source>
</reference>